<dbReference type="EC" id="1.11.1.21" evidence="1"/>
<dbReference type="EMBL" id="DQ872161">
    <property type="protein sequence ID" value="ABJ97682.1"/>
    <property type="molecule type" value="Genomic_DNA"/>
</dbReference>
<dbReference type="EMBL" id="CU458896">
    <property type="protein sequence ID" value="CAM62551.1"/>
    <property type="molecule type" value="Genomic_DNA"/>
</dbReference>
<dbReference type="RefSeq" id="WP_005111000.1">
    <property type="nucleotide sequence ID" value="NZ_MLCG01000006.1"/>
</dbReference>
<dbReference type="SMR" id="B1MBD0"/>
<dbReference type="GeneID" id="93379409"/>
<dbReference type="KEGG" id="mab:MAB_2470c"/>
<dbReference type="Proteomes" id="UP000007137">
    <property type="component" value="Chromosome"/>
</dbReference>
<dbReference type="GO" id="GO:0005829">
    <property type="term" value="C:cytosol"/>
    <property type="evidence" value="ECO:0007669"/>
    <property type="project" value="TreeGrafter"/>
</dbReference>
<dbReference type="GO" id="GO:0004096">
    <property type="term" value="F:catalase activity"/>
    <property type="evidence" value="ECO:0007669"/>
    <property type="project" value="UniProtKB-UniRule"/>
</dbReference>
<dbReference type="GO" id="GO:0020037">
    <property type="term" value="F:heme binding"/>
    <property type="evidence" value="ECO:0007669"/>
    <property type="project" value="InterPro"/>
</dbReference>
<dbReference type="GO" id="GO:0046872">
    <property type="term" value="F:metal ion binding"/>
    <property type="evidence" value="ECO:0007669"/>
    <property type="project" value="UniProtKB-KW"/>
</dbReference>
<dbReference type="GO" id="GO:0070301">
    <property type="term" value="P:cellular response to hydrogen peroxide"/>
    <property type="evidence" value="ECO:0007669"/>
    <property type="project" value="TreeGrafter"/>
</dbReference>
<dbReference type="GO" id="GO:0042744">
    <property type="term" value="P:hydrogen peroxide catabolic process"/>
    <property type="evidence" value="ECO:0007669"/>
    <property type="project" value="UniProtKB-KW"/>
</dbReference>
<dbReference type="CDD" id="cd00649">
    <property type="entry name" value="catalase_peroxidase_1"/>
    <property type="match status" value="1"/>
</dbReference>
<dbReference type="CDD" id="cd08200">
    <property type="entry name" value="catalase_peroxidase_2"/>
    <property type="match status" value="1"/>
</dbReference>
<dbReference type="FunFam" id="1.10.420.10:FF:000002">
    <property type="entry name" value="Catalase-peroxidase"/>
    <property type="match status" value="1"/>
</dbReference>
<dbReference type="FunFam" id="1.10.420.10:FF:000004">
    <property type="entry name" value="Catalase-peroxidase"/>
    <property type="match status" value="1"/>
</dbReference>
<dbReference type="FunFam" id="1.10.520.10:FF:000002">
    <property type="entry name" value="Catalase-peroxidase"/>
    <property type="match status" value="1"/>
</dbReference>
<dbReference type="Gene3D" id="1.10.520.10">
    <property type="match status" value="2"/>
</dbReference>
<dbReference type="Gene3D" id="1.10.420.10">
    <property type="entry name" value="Peroxidase, domain 2"/>
    <property type="match status" value="2"/>
</dbReference>
<dbReference type="HAMAP" id="MF_01961">
    <property type="entry name" value="Catal_peroxid"/>
    <property type="match status" value="1"/>
</dbReference>
<dbReference type="InterPro" id="IPR000763">
    <property type="entry name" value="Catalase_peroxidase"/>
</dbReference>
<dbReference type="InterPro" id="IPR002016">
    <property type="entry name" value="Haem_peroxidase"/>
</dbReference>
<dbReference type="InterPro" id="IPR010255">
    <property type="entry name" value="Haem_peroxidase_sf"/>
</dbReference>
<dbReference type="InterPro" id="IPR019794">
    <property type="entry name" value="Peroxidases_AS"/>
</dbReference>
<dbReference type="InterPro" id="IPR019793">
    <property type="entry name" value="Peroxidases_heam-ligand_BS"/>
</dbReference>
<dbReference type="NCBIfam" id="TIGR00198">
    <property type="entry name" value="cat_per_HPI"/>
    <property type="match status" value="1"/>
</dbReference>
<dbReference type="NCBIfam" id="NF011635">
    <property type="entry name" value="PRK15061.1"/>
    <property type="match status" value="1"/>
</dbReference>
<dbReference type="PANTHER" id="PTHR30555:SF0">
    <property type="entry name" value="CATALASE-PEROXIDASE"/>
    <property type="match status" value="1"/>
</dbReference>
<dbReference type="PANTHER" id="PTHR30555">
    <property type="entry name" value="HYDROPEROXIDASE I, BIFUNCTIONAL CATALASE-PEROXIDASE"/>
    <property type="match status" value="1"/>
</dbReference>
<dbReference type="Pfam" id="PF00141">
    <property type="entry name" value="peroxidase"/>
    <property type="match status" value="2"/>
</dbReference>
<dbReference type="PRINTS" id="PR00460">
    <property type="entry name" value="BPEROXIDASE"/>
</dbReference>
<dbReference type="PRINTS" id="PR00458">
    <property type="entry name" value="PEROXIDASE"/>
</dbReference>
<dbReference type="SUPFAM" id="SSF48113">
    <property type="entry name" value="Heme-dependent peroxidases"/>
    <property type="match status" value="2"/>
</dbReference>
<dbReference type="PROSITE" id="PS00435">
    <property type="entry name" value="PEROXIDASE_1"/>
    <property type="match status" value="1"/>
</dbReference>
<dbReference type="PROSITE" id="PS00436">
    <property type="entry name" value="PEROXIDASE_2"/>
    <property type="match status" value="1"/>
</dbReference>
<dbReference type="PROSITE" id="PS50873">
    <property type="entry name" value="PEROXIDASE_4"/>
    <property type="match status" value="1"/>
</dbReference>
<keyword id="KW-0349">Heme</keyword>
<keyword id="KW-0376">Hydrogen peroxide</keyword>
<keyword id="KW-0408">Iron</keyword>
<keyword id="KW-0479">Metal-binding</keyword>
<keyword id="KW-0560">Oxidoreductase</keyword>
<keyword id="KW-0575">Peroxidase</keyword>
<keyword id="KW-1185">Reference proteome</keyword>
<accession>B1MBD0</accession>
<accession>A0F0B8</accession>
<name>KATG_MYCA9</name>
<reference key="1">
    <citation type="submission" date="2006-07" db="EMBL/GenBank/DDBJ databases">
        <authorList>
            <person name="Park Y."/>
            <person name="Lee S."/>
            <person name="Ryu S."/>
            <person name="Bai G."/>
            <person name="Cho S."/>
        </authorList>
    </citation>
    <scope>NUCLEOTIDE SEQUENCE [GENOMIC DNA]</scope>
</reference>
<reference key="2">
    <citation type="journal article" date="2009" name="PLoS ONE">
        <title>Non mycobacterial virulence genes in the genome of the emerging pathogen Mycobacterium abscessus.</title>
        <authorList>
            <person name="Ripoll F."/>
            <person name="Pasek S."/>
            <person name="Schenowitz C."/>
            <person name="Dossat C."/>
            <person name="Barbe V."/>
            <person name="Rottman M."/>
            <person name="Macheras E."/>
            <person name="Heym B."/>
            <person name="Herrmann J.L."/>
            <person name="Daffe M."/>
            <person name="Brosch R."/>
            <person name="Risler J.L."/>
            <person name="Gaillard J.L."/>
        </authorList>
    </citation>
    <scope>NUCLEOTIDE SEQUENCE [LARGE SCALE GENOMIC DNA]</scope>
    <source>
        <strain>ATCC 19977 / DSM 44196 / CCUG 20993 / CIP 104536 / JCM 13569 / NCTC 13031 / TMC 1543 / L948</strain>
    </source>
</reference>
<comment type="function">
    <text evidence="1">Bifunctional enzyme with both catalase and broad-spectrum peroxidase activity.</text>
</comment>
<comment type="catalytic activity">
    <reaction evidence="1">
        <text>H2O2 + AH2 = A + 2 H2O</text>
        <dbReference type="Rhea" id="RHEA:30275"/>
        <dbReference type="ChEBI" id="CHEBI:13193"/>
        <dbReference type="ChEBI" id="CHEBI:15377"/>
        <dbReference type="ChEBI" id="CHEBI:16240"/>
        <dbReference type="ChEBI" id="CHEBI:17499"/>
        <dbReference type="EC" id="1.11.1.21"/>
    </reaction>
</comment>
<comment type="catalytic activity">
    <reaction evidence="1">
        <text>2 H2O2 = O2 + 2 H2O</text>
        <dbReference type="Rhea" id="RHEA:20309"/>
        <dbReference type="ChEBI" id="CHEBI:15377"/>
        <dbReference type="ChEBI" id="CHEBI:15379"/>
        <dbReference type="ChEBI" id="CHEBI:16240"/>
        <dbReference type="EC" id="1.11.1.21"/>
    </reaction>
</comment>
<comment type="cofactor">
    <cofactor evidence="1">
        <name>heme b</name>
        <dbReference type="ChEBI" id="CHEBI:60344"/>
    </cofactor>
    <text evidence="1">Binds 1 heme b (iron(II)-protoporphyrin IX) group per dimer.</text>
</comment>
<comment type="subunit">
    <text evidence="1">Homodimer or homotetramer.</text>
</comment>
<comment type="PTM">
    <text evidence="1">Formation of the three residue Trp-Tyr-Met cross-link is important for the catalase, but not the peroxidase activity of the enzyme.</text>
</comment>
<comment type="similarity">
    <text evidence="1">Belongs to the peroxidase family. Peroxidase/catalase subfamily.</text>
</comment>
<sequence>MSEEHPPIAEANSQPSNGCPVAGGRLNYPVEGGNANREWWPTQLNLQILKKNPPAANPLGEDFDYAKAVQTIDVDQLKADVAKVLTDSQDWWPADFGNYGPMFIRMAWHAAGTYRVGDGRGGAGAGMQRFAPLNSWPDNVLLDRARRLLWPVKKKYGNKLSWADLIVFAGNHAMDTMGFKTFGFAFGREDRWEPEQDVYWGPEHTWLGDERYTGDRDLENPLAAVQMGLIYVNPEGPNGNPDPLAAAIDIRETFGRMAMNDEETAALIVGGHTFGKTHGAGDAGLVGPDPEAAPLEQMGIGWKSAFGSGKGNDAIGSGLEVIWTHTPTKWDNSFLEILYGNEWELTKSPAGAHQWKPKDGGWANSVPMAQGTGKTHPSMLTTDLSMRFDPIYGQITKRWLDHPEELADAYAKAWYKLIHRDLGPLSRYLGPLVPKETLPWQDVIPVSETNVGADDVAELKKQVLASGLTVPQLVSTAWKAAASYRNSDKRGGANGGRIRLQPQAGWESNEPDELAQVIRILEGVQESFNAGDKKISFADLVVLGGAAAVEKAARDAGFDITVPFTPGRGDATQEQTDVESFSYLEPTADGFRNYLGKGAQIPAEYKLIDRANLLALSPPELAVLVGGLRVLGANYQGSELGVLTDRPGTLTNDFFVNLVDMGTEWTPSPADDGTYVGTDRATGASKWTASRVDLVFGANSELRALAEVYAQDDAQEKFAKDFVAAWVKVSDADRFDVR</sequence>
<organism>
    <name type="scientific">Mycobacteroides abscessus (strain ATCC 19977 / DSM 44196 / CCUG 20993 / CIP 104536 / JCM 13569 / NCTC 13031 / TMC 1543 / L948)</name>
    <name type="common">Mycobacterium abscessus</name>
    <dbReference type="NCBI Taxonomy" id="561007"/>
    <lineage>
        <taxon>Bacteria</taxon>
        <taxon>Bacillati</taxon>
        <taxon>Actinomycetota</taxon>
        <taxon>Actinomycetes</taxon>
        <taxon>Mycobacteriales</taxon>
        <taxon>Mycobacteriaceae</taxon>
        <taxon>Mycobacteroides</taxon>
        <taxon>Mycobacteroides abscessus</taxon>
    </lineage>
</organism>
<proteinExistence type="inferred from homology"/>
<protein>
    <recommendedName>
        <fullName evidence="1">Catalase-peroxidase</fullName>
        <shortName evidence="1">CP</shortName>
        <ecNumber evidence="1">1.11.1.21</ecNumber>
    </recommendedName>
    <alternativeName>
        <fullName evidence="1">Peroxidase/catalase</fullName>
    </alternativeName>
</protein>
<evidence type="ECO:0000255" key="1">
    <source>
        <dbReference type="HAMAP-Rule" id="MF_01961"/>
    </source>
</evidence>
<evidence type="ECO:0000256" key="2">
    <source>
        <dbReference type="SAM" id="MobiDB-lite"/>
    </source>
</evidence>
<evidence type="ECO:0000305" key="3"/>
<gene>
    <name evidence="1" type="primary">katG</name>
    <name type="ordered locus">MAB_2470c</name>
</gene>
<feature type="chain" id="PRO_0000354834" description="Catalase-peroxidase">
    <location>
        <begin position="1"/>
        <end position="738"/>
    </location>
</feature>
<feature type="region of interest" description="Disordered" evidence="2">
    <location>
        <begin position="1"/>
        <end position="24"/>
    </location>
</feature>
<feature type="active site" description="Proton acceptor" evidence="1">
    <location>
        <position position="109"/>
    </location>
</feature>
<feature type="binding site" description="axial binding residue" evidence="1">
    <location>
        <position position="272"/>
    </location>
    <ligand>
        <name>heme b</name>
        <dbReference type="ChEBI" id="CHEBI:60344"/>
    </ligand>
    <ligandPart>
        <name>Fe</name>
        <dbReference type="ChEBI" id="CHEBI:18248"/>
    </ligandPart>
</feature>
<feature type="site" description="Transition state stabilizer" evidence="1">
    <location>
        <position position="105"/>
    </location>
</feature>
<feature type="cross-link" description="Tryptophyl-tyrosyl-methioninium (Trp-Tyr) (with M-257)" evidence="1">
    <location>
        <begin position="108"/>
        <end position="231"/>
    </location>
</feature>
<feature type="cross-link" description="Tryptophyl-tyrosyl-methioninium (Tyr-Met) (with W-108)" evidence="1">
    <location>
        <begin position="231"/>
        <end position="257"/>
    </location>
</feature>
<feature type="sequence conflict" description="In Ref. 1; ABJ97682." evidence="3" ref="1">
    <original>A</original>
    <variation>V</variation>
    <location>
        <position position="719"/>
    </location>
</feature>